<name>ALDH2_MESAU</name>
<dbReference type="EC" id="1.2.1.3"/>
<dbReference type="SMR" id="P81178"/>
<dbReference type="STRING" id="10036.ENSMAUP00000007329"/>
<dbReference type="eggNOG" id="KOG2450">
    <property type="taxonomic scope" value="Eukaryota"/>
</dbReference>
<dbReference type="SABIO-RK" id="P81178"/>
<dbReference type="UniPathway" id="UPA00780">
    <property type="reaction ID" value="UER00768"/>
</dbReference>
<dbReference type="Proteomes" id="UP000189706">
    <property type="component" value="Unplaced"/>
</dbReference>
<dbReference type="GO" id="GO:0005759">
    <property type="term" value="C:mitochondrial matrix"/>
    <property type="evidence" value="ECO:0007669"/>
    <property type="project" value="UniProtKB-SubCell"/>
</dbReference>
<dbReference type="GO" id="GO:0005739">
    <property type="term" value="C:mitochondrion"/>
    <property type="evidence" value="ECO:0000250"/>
    <property type="project" value="UniProtKB"/>
</dbReference>
<dbReference type="GO" id="GO:0004029">
    <property type="term" value="F:aldehyde dehydrogenase (NAD+) activity"/>
    <property type="evidence" value="ECO:0000250"/>
    <property type="project" value="UniProtKB"/>
</dbReference>
<dbReference type="GO" id="GO:0106435">
    <property type="term" value="F:carboxylesterase activity"/>
    <property type="evidence" value="ECO:0000250"/>
    <property type="project" value="UniProtKB"/>
</dbReference>
<dbReference type="GO" id="GO:0051287">
    <property type="term" value="F:NAD binding"/>
    <property type="evidence" value="ECO:0000250"/>
    <property type="project" value="CAFA"/>
</dbReference>
<dbReference type="GO" id="GO:0008957">
    <property type="term" value="F:phenylacetaldehyde dehydrogenase (NAD+) activity"/>
    <property type="evidence" value="ECO:0000250"/>
    <property type="project" value="UniProtKB"/>
</dbReference>
<dbReference type="GO" id="GO:0046185">
    <property type="term" value="P:aldehyde catabolic process"/>
    <property type="evidence" value="ECO:0000250"/>
    <property type="project" value="UniProtKB"/>
</dbReference>
<dbReference type="GO" id="GO:0006068">
    <property type="term" value="P:ethanol catabolic process"/>
    <property type="evidence" value="ECO:0007669"/>
    <property type="project" value="UniProtKB-UniPathway"/>
</dbReference>
<dbReference type="GO" id="GO:0018937">
    <property type="term" value="P:nitroglycerin metabolic process"/>
    <property type="evidence" value="ECO:0000250"/>
    <property type="project" value="UniProtKB"/>
</dbReference>
<dbReference type="GO" id="GO:1903179">
    <property type="term" value="P:regulation of dopamine biosynthetic process"/>
    <property type="evidence" value="ECO:0000250"/>
    <property type="project" value="UniProtKB"/>
</dbReference>
<dbReference type="GO" id="GO:1905627">
    <property type="term" value="P:regulation of serotonin biosynthetic process"/>
    <property type="evidence" value="ECO:0000250"/>
    <property type="project" value="UniProtKB"/>
</dbReference>
<dbReference type="CDD" id="cd07141">
    <property type="entry name" value="ALDH_F1AB_F2_RALDH1"/>
    <property type="match status" value="1"/>
</dbReference>
<dbReference type="FunFam" id="3.40.605.10:FF:000029">
    <property type="entry name" value="Aldehyde dehydrogenase, mitochondrial"/>
    <property type="match status" value="1"/>
</dbReference>
<dbReference type="FunFam" id="3.40.605.10:FF:000026">
    <property type="entry name" value="Aldehyde dehydrogenase, putative"/>
    <property type="match status" value="1"/>
</dbReference>
<dbReference type="FunFam" id="3.40.309.10:FF:000001">
    <property type="entry name" value="Mitochondrial aldehyde dehydrogenase 2"/>
    <property type="match status" value="1"/>
</dbReference>
<dbReference type="Gene3D" id="3.40.605.10">
    <property type="entry name" value="Aldehyde Dehydrogenase, Chain A, domain 1"/>
    <property type="match status" value="1"/>
</dbReference>
<dbReference type="Gene3D" id="3.40.309.10">
    <property type="entry name" value="Aldehyde Dehydrogenase, Chain A, domain 2"/>
    <property type="match status" value="1"/>
</dbReference>
<dbReference type="InterPro" id="IPR016161">
    <property type="entry name" value="Ald_DH/histidinol_DH"/>
</dbReference>
<dbReference type="InterPro" id="IPR016163">
    <property type="entry name" value="Ald_DH_C"/>
</dbReference>
<dbReference type="InterPro" id="IPR016160">
    <property type="entry name" value="Ald_DH_CS_CYS"/>
</dbReference>
<dbReference type="InterPro" id="IPR029510">
    <property type="entry name" value="Ald_DH_CS_GLU"/>
</dbReference>
<dbReference type="InterPro" id="IPR016162">
    <property type="entry name" value="Ald_DH_N"/>
</dbReference>
<dbReference type="InterPro" id="IPR015590">
    <property type="entry name" value="Aldehyde_DH_dom"/>
</dbReference>
<dbReference type="PANTHER" id="PTHR11699">
    <property type="entry name" value="ALDEHYDE DEHYDROGENASE-RELATED"/>
    <property type="match status" value="1"/>
</dbReference>
<dbReference type="Pfam" id="PF00171">
    <property type="entry name" value="Aldedh"/>
    <property type="match status" value="1"/>
</dbReference>
<dbReference type="SUPFAM" id="SSF53720">
    <property type="entry name" value="ALDH-like"/>
    <property type="match status" value="1"/>
</dbReference>
<dbReference type="PROSITE" id="PS00070">
    <property type="entry name" value="ALDEHYDE_DEHYDR_CYS"/>
    <property type="match status" value="1"/>
</dbReference>
<dbReference type="PROSITE" id="PS00687">
    <property type="entry name" value="ALDEHYDE_DEHYDR_GLU"/>
    <property type="match status" value="1"/>
</dbReference>
<sequence length="500" mass="54334">SAAATSAVPAPNQQPEVFCNQIFINNEWHDAVSKKTFPTVNPSTGEVICQVAEGSKEDVDKAVKAARAAFQLGSPWRRMDASDRGRLLNRLADLIERDRTYLAALETLDNGKPYVISYLVDLDMVLKCLRYYAGWADKYHGKTIPIDGDFFSYTRHEPVGVCGQIIPWNFPLLMQAWKLGPALATGNVVVMKVAEQTPLTALYVANLIKEAGFPPGVVNIVPGFGPTAGAAIASHEDVDKVAFTGSTEVGHLIQVAAGSSNLKRVTLELGGKSPNIIMSDADMDWAVEQAHFALFFNQGQCCCAGSRTFVQEDVYDEFVERSVARAKSRVVGNPFDSRTEQGPQVDETQFKKILGYIKSGQQEGAKLLCGGGAAADRGYFIQPTVFGDVKDGMTIAKEEIFGPVMQILKFKTIEEVVGRANNSKYGLAAAVFTKDLDKANYLSQALQAGTVWINCYDVFGAQSPFGGYKMSGSGRELGEYGLQAYTEVKTVTIKVPQKNS</sequence>
<evidence type="ECO:0000250" key="1"/>
<evidence type="ECO:0000250" key="2">
    <source>
        <dbReference type="UniProtKB" id="P05091"/>
    </source>
</evidence>
<evidence type="ECO:0000250" key="3">
    <source>
        <dbReference type="UniProtKB" id="P20000"/>
    </source>
</evidence>
<evidence type="ECO:0000250" key="4">
    <source>
        <dbReference type="UniProtKB" id="P47738"/>
    </source>
</evidence>
<evidence type="ECO:0000255" key="5">
    <source>
        <dbReference type="PROSITE-ProRule" id="PRU10007"/>
    </source>
</evidence>
<evidence type="ECO:0000255" key="6">
    <source>
        <dbReference type="PROSITE-ProRule" id="PRU10008"/>
    </source>
</evidence>
<evidence type="ECO:0000305" key="7"/>
<organism>
    <name type="scientific">Mesocricetus auratus</name>
    <name type="common">Golden hamster</name>
    <dbReference type="NCBI Taxonomy" id="10036"/>
    <lineage>
        <taxon>Eukaryota</taxon>
        <taxon>Metazoa</taxon>
        <taxon>Chordata</taxon>
        <taxon>Craniata</taxon>
        <taxon>Vertebrata</taxon>
        <taxon>Euteleostomi</taxon>
        <taxon>Mammalia</taxon>
        <taxon>Eutheria</taxon>
        <taxon>Euarchontoglires</taxon>
        <taxon>Glires</taxon>
        <taxon>Rodentia</taxon>
        <taxon>Myomorpha</taxon>
        <taxon>Muroidea</taxon>
        <taxon>Cricetidae</taxon>
        <taxon>Cricetinae</taxon>
        <taxon>Mesocricetus</taxon>
    </lineage>
</organism>
<feature type="chain" id="PRO_0000056468" description="Aldehyde dehydrogenase, mitochondrial">
    <location>
        <begin position="1"/>
        <end position="500"/>
    </location>
</feature>
<feature type="active site" description="Proton acceptor" evidence="5 6">
    <location>
        <position position="268"/>
    </location>
</feature>
<feature type="active site" description="Nucleophile" evidence="5 6">
    <location>
        <position position="302"/>
    </location>
</feature>
<feature type="binding site" evidence="1">
    <location>
        <begin position="245"/>
        <end position="250"/>
    </location>
    <ligand>
        <name>NAD(+)</name>
        <dbReference type="ChEBI" id="CHEBI:57540"/>
    </ligand>
</feature>
<feature type="site" description="Transition state stabilizer" evidence="3">
    <location>
        <position position="169"/>
    </location>
</feature>
<feature type="modified residue" description="N6-acetyllysine" evidence="4">
    <location>
        <position position="35"/>
    </location>
</feature>
<feature type="modified residue" description="N6-acetyllysine" evidence="4">
    <location>
        <position position="56"/>
    </location>
</feature>
<feature type="modified residue" description="N6-acetyllysine" evidence="4">
    <location>
        <position position="61"/>
    </location>
</feature>
<feature type="modified residue" description="N6-acetyllysine" evidence="4">
    <location>
        <position position="142"/>
    </location>
</feature>
<feature type="modified residue" description="N6-acetyllysine" evidence="4">
    <location>
        <position position="351"/>
    </location>
</feature>
<feature type="modified residue" description="N6-acetyllysine" evidence="4">
    <location>
        <position position="358"/>
    </location>
</feature>
<feature type="modified residue" description="N6-acetyllysine" evidence="4">
    <location>
        <position position="366"/>
    </location>
</feature>
<feature type="modified residue" description="N6-acetyllysine" evidence="4">
    <location>
        <position position="390"/>
    </location>
</feature>
<feature type="modified residue" description="N6-acetyllysine" evidence="4">
    <location>
        <position position="409"/>
    </location>
</feature>
<feature type="modified residue" description="N6-acetyllysine" evidence="4">
    <location>
        <position position="411"/>
    </location>
</feature>
<feature type="modified residue" description="N6-acetyllysine" evidence="4">
    <location>
        <position position="424"/>
    </location>
</feature>
<feature type="modified residue" description="N6-acetyllysine" evidence="4">
    <location>
        <position position="434"/>
    </location>
</feature>
<proteinExistence type="evidence at protein level"/>
<comment type="function">
    <text evidence="2">Required for clearance of cellular formaldehyde, a cytotoxic and carcinogenic metabolite that induces DNA damage.</text>
</comment>
<comment type="catalytic activity">
    <reaction>
        <text>an aldehyde + NAD(+) + H2O = a carboxylate + NADH + 2 H(+)</text>
        <dbReference type="Rhea" id="RHEA:16185"/>
        <dbReference type="ChEBI" id="CHEBI:15377"/>
        <dbReference type="ChEBI" id="CHEBI:15378"/>
        <dbReference type="ChEBI" id="CHEBI:17478"/>
        <dbReference type="ChEBI" id="CHEBI:29067"/>
        <dbReference type="ChEBI" id="CHEBI:57540"/>
        <dbReference type="ChEBI" id="CHEBI:57945"/>
        <dbReference type="EC" id="1.2.1.3"/>
    </reaction>
</comment>
<comment type="pathway">
    <text>Alcohol metabolism; ethanol degradation; acetate from ethanol: step 2/2.</text>
</comment>
<comment type="subunit">
    <text>Homotetramer.</text>
</comment>
<comment type="subcellular location">
    <subcellularLocation>
        <location>Mitochondrion matrix</location>
    </subcellularLocation>
</comment>
<comment type="PTM">
    <text evidence="2">In response to mitochondrial stress, the precursor protein is ubiquitinated by the SIFI complex in the cytoplasm before mitochondrial import, leading to its degradation. Within the SIFI complex, UBR4 initiates ubiquitin chain that are further elongated or branched by KCMF1.</text>
</comment>
<comment type="similarity">
    <text evidence="7">Belongs to the aldehyde dehydrogenase family.</text>
</comment>
<reference key="1">
    <citation type="journal article" date="1997" name="FEBS Lett.">
        <title>Class 2 aldehyde dehydrogenase. Characterization of the hamster enzyme, sensitive to daidzin and conserved within the family of multiple forms.</title>
        <authorList>
            <person name="Hjelmqvist L."/>
            <person name="Lundgren R."/>
            <person name="Norin A."/>
            <person name="Joernvall H."/>
            <person name="Vallee B."/>
            <person name="Klyosov A."/>
            <person name="Keung W.M."/>
        </authorList>
    </citation>
    <scope>PROTEIN SEQUENCE</scope>
    <source>
        <tissue>Liver</tissue>
    </source>
</reference>
<reference key="2">
    <citation type="journal article" date="2010" name="Asian J. Androl.">
        <title>Glucose-regulated protein precursor (GRP78) and tumor rejection antigen (GP96) are unique to hamster caput epididymal spermatozoa.</title>
        <authorList>
            <person name="Kameshwari D.B."/>
            <person name="Bhande S."/>
            <person name="Sundaram C.S."/>
            <person name="Kota V."/>
            <person name="Siva A.B."/>
            <person name="Shivaji S."/>
        </authorList>
    </citation>
    <scope>IDENTIFICATION BY MASS SPECTROMETRY</scope>
</reference>
<keyword id="KW-0007">Acetylation</keyword>
<keyword id="KW-0903">Direct protein sequencing</keyword>
<keyword id="KW-0496">Mitochondrion</keyword>
<keyword id="KW-0520">NAD</keyword>
<keyword id="KW-0560">Oxidoreductase</keyword>
<keyword id="KW-1185">Reference proteome</keyword>
<keyword id="KW-0832">Ubl conjugation</keyword>
<protein>
    <recommendedName>
        <fullName>Aldehyde dehydrogenase, mitochondrial</fullName>
        <ecNumber>1.2.1.3</ecNumber>
    </recommendedName>
    <alternativeName>
        <fullName>ALDH class 2</fullName>
    </alternativeName>
    <alternativeName>
        <fullName>ALDH-E2</fullName>
    </alternativeName>
    <alternativeName>
        <fullName>ALDH1</fullName>
    </alternativeName>
</protein>
<accession>P81178</accession>
<gene>
    <name type="primary">ALDH2</name>
</gene>